<name>NUOH_LEPBA</name>
<gene>
    <name evidence="1" type="primary">nuoH</name>
    <name type="ordered locus">LBF_1248</name>
</gene>
<protein>
    <recommendedName>
        <fullName evidence="1">NADH-quinone oxidoreductase subunit H</fullName>
        <ecNumber evidence="1">7.1.1.-</ecNumber>
    </recommendedName>
    <alternativeName>
        <fullName evidence="1">NADH dehydrogenase I subunit H</fullName>
    </alternativeName>
    <alternativeName>
        <fullName evidence="1">NDH-1 subunit H</fullName>
    </alternativeName>
</protein>
<sequence>MDWALILAWGIKILSLFFVILTGVAYYTLAERKFAGFIQDRPGPNRAGPFGIFQPLADGIKFIAKEEIFPKNVSKGMYLLAPTISMTCAIMAWAVIPFGGTLPAPEWLTTLTGVATIDLQIANPDSGVLYMLAISSLSVYGIMIAGWSSNNKYSLLGGVRSTAQMISYELPMGLSIVAIVIMTGSLKLTDISDSQKDMWNILSPPGFVAFFIYVTAMFAETNRLPFDLAEAESELVVGFHTEYGAFKFALFFLAEYMNMITMSCLTTLLFFGGYNVPFQLGAGSEYQAFIGLGFFILKVLFFAFLFIWVRWTLPRFRYDQLMKLGWKKMIPWGLFVVMFASIYTVYWKEGWMKLFI</sequence>
<accession>B0SFU0</accession>
<reference key="1">
    <citation type="journal article" date="2008" name="PLoS ONE">
        <title>Genome sequence of the saprophyte Leptospira biflexa provides insights into the evolution of Leptospira and the pathogenesis of leptospirosis.</title>
        <authorList>
            <person name="Picardeau M."/>
            <person name="Bulach D.M."/>
            <person name="Bouchier C."/>
            <person name="Zuerner R.L."/>
            <person name="Zidane N."/>
            <person name="Wilson P.J."/>
            <person name="Creno S."/>
            <person name="Kuczek E.S."/>
            <person name="Bommezzadri S."/>
            <person name="Davis J.C."/>
            <person name="McGrath A."/>
            <person name="Johnson M.J."/>
            <person name="Boursaux-Eude C."/>
            <person name="Seemann T."/>
            <person name="Rouy Z."/>
            <person name="Coppel R.L."/>
            <person name="Rood J.I."/>
            <person name="Lajus A."/>
            <person name="Davies J.K."/>
            <person name="Medigue C."/>
            <person name="Adler B."/>
        </authorList>
    </citation>
    <scope>NUCLEOTIDE SEQUENCE [LARGE SCALE GENOMIC DNA]</scope>
    <source>
        <strain>Patoc 1 / Ames</strain>
    </source>
</reference>
<evidence type="ECO:0000255" key="1">
    <source>
        <dbReference type="HAMAP-Rule" id="MF_01350"/>
    </source>
</evidence>
<feature type="chain" id="PRO_1000143605" description="NADH-quinone oxidoreductase subunit H">
    <location>
        <begin position="1"/>
        <end position="356"/>
    </location>
</feature>
<feature type="transmembrane region" description="Helical" evidence="1">
    <location>
        <begin position="4"/>
        <end position="24"/>
    </location>
</feature>
<feature type="transmembrane region" description="Helical" evidence="1">
    <location>
        <begin position="79"/>
        <end position="99"/>
    </location>
</feature>
<feature type="transmembrane region" description="Helical" evidence="1">
    <location>
        <begin position="127"/>
        <end position="147"/>
    </location>
</feature>
<feature type="transmembrane region" description="Helical" evidence="1">
    <location>
        <begin position="166"/>
        <end position="186"/>
    </location>
</feature>
<feature type="transmembrane region" description="Helical" evidence="1">
    <location>
        <begin position="198"/>
        <end position="218"/>
    </location>
</feature>
<feature type="transmembrane region" description="Helical" evidence="1">
    <location>
        <begin position="251"/>
        <end position="271"/>
    </location>
</feature>
<feature type="transmembrane region" description="Helical" evidence="1">
    <location>
        <begin position="289"/>
        <end position="309"/>
    </location>
</feature>
<feature type="transmembrane region" description="Helical" evidence="1">
    <location>
        <begin position="329"/>
        <end position="349"/>
    </location>
</feature>
<comment type="function">
    <text evidence="1">NDH-1 shuttles electrons from NADH, via FMN and iron-sulfur (Fe-S) centers, to quinones in the respiratory chain. The immediate electron acceptor for the enzyme in this species is believed to be ubiquinone. Couples the redox reaction to proton translocation (for every two electrons transferred, four hydrogen ions are translocated across the cytoplasmic membrane), and thus conserves the redox energy in a proton gradient. This subunit may bind ubiquinone.</text>
</comment>
<comment type="catalytic activity">
    <reaction evidence="1">
        <text>a quinone + NADH + 5 H(+)(in) = a quinol + NAD(+) + 4 H(+)(out)</text>
        <dbReference type="Rhea" id="RHEA:57888"/>
        <dbReference type="ChEBI" id="CHEBI:15378"/>
        <dbReference type="ChEBI" id="CHEBI:24646"/>
        <dbReference type="ChEBI" id="CHEBI:57540"/>
        <dbReference type="ChEBI" id="CHEBI:57945"/>
        <dbReference type="ChEBI" id="CHEBI:132124"/>
    </reaction>
</comment>
<comment type="subunit">
    <text evidence="1">NDH-1 is composed of 14 different subunits. Subunits NuoA, H, J, K, L, M, N constitute the membrane sector of the complex.</text>
</comment>
<comment type="subcellular location">
    <subcellularLocation>
        <location evidence="1">Cell inner membrane</location>
        <topology evidence="1">Multi-pass membrane protein</topology>
    </subcellularLocation>
</comment>
<comment type="similarity">
    <text evidence="1">Belongs to the complex I subunit 1 family.</text>
</comment>
<organism>
    <name type="scientific">Leptospira biflexa serovar Patoc (strain Patoc 1 / Ames)</name>
    <dbReference type="NCBI Taxonomy" id="355278"/>
    <lineage>
        <taxon>Bacteria</taxon>
        <taxon>Pseudomonadati</taxon>
        <taxon>Spirochaetota</taxon>
        <taxon>Spirochaetia</taxon>
        <taxon>Leptospirales</taxon>
        <taxon>Leptospiraceae</taxon>
        <taxon>Leptospira</taxon>
    </lineage>
</organism>
<dbReference type="EC" id="7.1.1.-" evidence="1"/>
<dbReference type="EMBL" id="CP000777">
    <property type="protein sequence ID" value="ABZ93770.1"/>
    <property type="molecule type" value="Genomic_DNA"/>
</dbReference>
<dbReference type="RefSeq" id="WP_012388293.1">
    <property type="nucleotide sequence ID" value="NC_010842.1"/>
</dbReference>
<dbReference type="SMR" id="B0SFU0"/>
<dbReference type="KEGG" id="lbf:LBF_1248"/>
<dbReference type="HOGENOM" id="CLU_015134_0_1_12"/>
<dbReference type="GO" id="GO:0005886">
    <property type="term" value="C:plasma membrane"/>
    <property type="evidence" value="ECO:0007669"/>
    <property type="project" value="UniProtKB-SubCell"/>
</dbReference>
<dbReference type="GO" id="GO:0003954">
    <property type="term" value="F:NADH dehydrogenase activity"/>
    <property type="evidence" value="ECO:0007669"/>
    <property type="project" value="TreeGrafter"/>
</dbReference>
<dbReference type="GO" id="GO:0016655">
    <property type="term" value="F:oxidoreductase activity, acting on NAD(P)H, quinone or similar compound as acceptor"/>
    <property type="evidence" value="ECO:0007669"/>
    <property type="project" value="UniProtKB-UniRule"/>
</dbReference>
<dbReference type="GO" id="GO:0048038">
    <property type="term" value="F:quinone binding"/>
    <property type="evidence" value="ECO:0007669"/>
    <property type="project" value="UniProtKB-KW"/>
</dbReference>
<dbReference type="GO" id="GO:0009060">
    <property type="term" value="P:aerobic respiration"/>
    <property type="evidence" value="ECO:0007669"/>
    <property type="project" value="TreeGrafter"/>
</dbReference>
<dbReference type="HAMAP" id="MF_01350">
    <property type="entry name" value="NDH1_NuoH"/>
    <property type="match status" value="1"/>
</dbReference>
<dbReference type="InterPro" id="IPR001694">
    <property type="entry name" value="NADH_UbQ_OxRdtase_su1/FPO"/>
</dbReference>
<dbReference type="InterPro" id="IPR018086">
    <property type="entry name" value="NADH_UbQ_OxRdtase_su1_CS"/>
</dbReference>
<dbReference type="NCBIfam" id="NF004741">
    <property type="entry name" value="PRK06076.1-2"/>
    <property type="match status" value="1"/>
</dbReference>
<dbReference type="PANTHER" id="PTHR11432">
    <property type="entry name" value="NADH DEHYDROGENASE SUBUNIT 1"/>
    <property type="match status" value="1"/>
</dbReference>
<dbReference type="PANTHER" id="PTHR11432:SF3">
    <property type="entry name" value="NADH-UBIQUINONE OXIDOREDUCTASE CHAIN 1"/>
    <property type="match status" value="1"/>
</dbReference>
<dbReference type="Pfam" id="PF00146">
    <property type="entry name" value="NADHdh"/>
    <property type="match status" value="1"/>
</dbReference>
<dbReference type="PROSITE" id="PS00668">
    <property type="entry name" value="COMPLEX1_ND1_2"/>
    <property type="match status" value="1"/>
</dbReference>
<proteinExistence type="inferred from homology"/>
<keyword id="KW-0997">Cell inner membrane</keyword>
<keyword id="KW-1003">Cell membrane</keyword>
<keyword id="KW-0472">Membrane</keyword>
<keyword id="KW-0520">NAD</keyword>
<keyword id="KW-0874">Quinone</keyword>
<keyword id="KW-1278">Translocase</keyword>
<keyword id="KW-0812">Transmembrane</keyword>
<keyword id="KW-1133">Transmembrane helix</keyword>
<keyword id="KW-0830">Ubiquinone</keyword>